<organism>
    <name type="scientific">Cryptocercus kyebangensis</name>
    <name type="common">Brown-hooded cockroach</name>
    <dbReference type="NCBI Taxonomy" id="161578"/>
    <lineage>
        <taxon>Eukaryota</taxon>
        <taxon>Metazoa</taxon>
        <taxon>Ecdysozoa</taxon>
        <taxon>Arthropoda</taxon>
        <taxon>Hexapoda</taxon>
        <taxon>Insecta</taxon>
        <taxon>Pterygota</taxon>
        <taxon>Neoptera</taxon>
        <taxon>Polyneoptera</taxon>
        <taxon>Dictyoptera</taxon>
        <taxon>Blattodea</taxon>
        <taxon>Blattoidea</taxon>
        <taxon>Cryptocercidae</taxon>
        <taxon>Cryptocercus</taxon>
    </lineage>
</organism>
<keyword id="KW-0027">Amidation</keyword>
<keyword id="KW-0903">Direct protein sequencing</keyword>
<keyword id="KW-0527">Neuropeptide</keyword>
<keyword id="KW-0964">Secreted</keyword>
<comment type="function">
    <text evidence="4">Mediates visceral muscle contractile activity (myotropic activity).</text>
</comment>
<comment type="subcellular location">
    <subcellularLocation>
        <location evidence="4">Secreted</location>
    </subcellularLocation>
</comment>
<comment type="similarity">
    <text evidence="1">Belongs to the periviscerokinin family.</text>
</comment>
<reference evidence="4" key="1">
    <citation type="journal article" date="2009" name="BMC Evol. Biol.">
        <title>A proteomic approach for studying insect phylogeny: CAPA peptides of ancient insect taxa (Dictyoptera, Blattoptera) as a test case.</title>
        <authorList>
            <person name="Roth S."/>
            <person name="Fromm B."/>
            <person name="Gaede G."/>
            <person name="Predel R."/>
        </authorList>
    </citation>
    <scope>PROTEIN SEQUENCE</scope>
    <scope>AMIDATION AT VAL-11</scope>
    <source>
        <tissue evidence="2">Abdominal perisympathetic organs</tissue>
    </source>
</reference>
<protein>
    <recommendedName>
        <fullName evidence="3">Periviscerokinin-2</fullName>
        <shortName evidence="3">CryKy-PVK-2</shortName>
    </recommendedName>
</protein>
<feature type="peptide" id="PRO_0000378779" description="Periviscerokinin-2" evidence="2">
    <location>
        <begin position="1"/>
        <end position="11"/>
    </location>
</feature>
<feature type="modified residue" description="Valine amide" evidence="2">
    <location>
        <position position="11"/>
    </location>
</feature>
<accession>P85572</accession>
<proteinExistence type="evidence at protein level"/>
<sequence>GSSGLISMPRV</sequence>
<evidence type="ECO:0000255" key="1"/>
<evidence type="ECO:0000269" key="2">
    <source>
    </source>
</evidence>
<evidence type="ECO:0000303" key="3">
    <source>
    </source>
</evidence>
<evidence type="ECO:0000305" key="4"/>
<dbReference type="GO" id="GO:0005576">
    <property type="term" value="C:extracellular region"/>
    <property type="evidence" value="ECO:0007669"/>
    <property type="project" value="UniProtKB-SubCell"/>
</dbReference>
<dbReference type="GO" id="GO:0007218">
    <property type="term" value="P:neuropeptide signaling pathway"/>
    <property type="evidence" value="ECO:0007669"/>
    <property type="project" value="UniProtKB-KW"/>
</dbReference>
<dbReference type="InterPro" id="IPR013231">
    <property type="entry name" value="Periviscerokinin"/>
</dbReference>
<dbReference type="Pfam" id="PF08259">
    <property type="entry name" value="Periviscerokin"/>
    <property type="match status" value="1"/>
</dbReference>
<name>PVK2_CRYKY</name>